<comment type="catalytic activity">
    <reaction evidence="1">
        <text>D-altronate + NAD(+) = keto-D-tagaturonate + NADH + H(+)</text>
        <dbReference type="Rhea" id="RHEA:17813"/>
        <dbReference type="ChEBI" id="CHEBI:15378"/>
        <dbReference type="ChEBI" id="CHEBI:17360"/>
        <dbReference type="ChEBI" id="CHEBI:17886"/>
        <dbReference type="ChEBI" id="CHEBI:57540"/>
        <dbReference type="ChEBI" id="CHEBI:57945"/>
        <dbReference type="EC" id="1.1.1.58"/>
    </reaction>
</comment>
<comment type="pathway">
    <text evidence="1">Carbohydrate metabolism; pentose and glucuronate interconversion.</text>
</comment>
<comment type="similarity">
    <text evidence="1">Belongs to the mannitol dehydrogenase family. UxaB subfamily.</text>
</comment>
<feature type="chain" id="PRO_0000170746" description="Altronate oxidoreductase">
    <location>
        <begin position="1"/>
        <end position="483"/>
    </location>
</feature>
<feature type="binding site" evidence="1">
    <location>
        <begin position="18"/>
        <end position="29"/>
    </location>
    <ligand>
        <name>NAD(+)</name>
        <dbReference type="ChEBI" id="CHEBI:57540"/>
    </ligand>
</feature>
<feature type="sequence conflict" description="In Ref. 3; AAS63082." evidence="2" ref="3">
    <original>A</original>
    <variation>S</variation>
    <location>
        <position position="455"/>
    </location>
</feature>
<proteinExistence type="inferred from homology"/>
<dbReference type="EC" id="1.1.1.58" evidence="1"/>
<dbReference type="EMBL" id="AL590842">
    <property type="protein sequence ID" value="CAL19260.1"/>
    <property type="molecule type" value="Genomic_DNA"/>
</dbReference>
<dbReference type="EMBL" id="AE009952">
    <property type="protein sequence ID" value="AAM87147.1"/>
    <property type="molecule type" value="Genomic_DNA"/>
</dbReference>
<dbReference type="EMBL" id="AE017042">
    <property type="protein sequence ID" value="AAS63082.1"/>
    <property type="molecule type" value="Genomic_DNA"/>
</dbReference>
<dbReference type="PIR" id="AB0072">
    <property type="entry name" value="AB0072"/>
</dbReference>
<dbReference type="RefSeq" id="WP_002210409.1">
    <property type="nucleotide sequence ID" value="NZ_WUCM01000101.1"/>
</dbReference>
<dbReference type="RefSeq" id="YP_002345652.1">
    <property type="nucleotide sequence ID" value="NC_003143.1"/>
</dbReference>
<dbReference type="SMR" id="Q8ZIC5"/>
<dbReference type="IntAct" id="Q8ZIC5">
    <property type="interactions" value="2"/>
</dbReference>
<dbReference type="STRING" id="214092.YPO0580"/>
<dbReference type="PaxDb" id="214092-YPO0580"/>
<dbReference type="DNASU" id="1148546"/>
<dbReference type="EnsemblBacteria" id="AAS63082">
    <property type="protein sequence ID" value="AAS63082"/>
    <property type="gene ID" value="YP_2900"/>
</dbReference>
<dbReference type="KEGG" id="ype:YPO0580"/>
<dbReference type="KEGG" id="ypk:y3599"/>
<dbReference type="KEGG" id="ypm:YP_2900"/>
<dbReference type="PATRIC" id="fig|214092.21.peg.837"/>
<dbReference type="eggNOG" id="COG0246">
    <property type="taxonomic scope" value="Bacteria"/>
</dbReference>
<dbReference type="HOGENOM" id="CLU_027324_1_0_6"/>
<dbReference type="OMA" id="HNTFCST"/>
<dbReference type="OrthoDB" id="9768714at2"/>
<dbReference type="UniPathway" id="UPA00246"/>
<dbReference type="Proteomes" id="UP000000815">
    <property type="component" value="Chromosome"/>
</dbReference>
<dbReference type="Proteomes" id="UP000001019">
    <property type="component" value="Chromosome"/>
</dbReference>
<dbReference type="Proteomes" id="UP000002490">
    <property type="component" value="Chromosome"/>
</dbReference>
<dbReference type="GO" id="GO:0005829">
    <property type="term" value="C:cytosol"/>
    <property type="evidence" value="ECO:0000318"/>
    <property type="project" value="GO_Central"/>
</dbReference>
<dbReference type="GO" id="GO:0008926">
    <property type="term" value="F:mannitol-1-phosphate 5-dehydrogenase activity"/>
    <property type="evidence" value="ECO:0000318"/>
    <property type="project" value="GO_Central"/>
</dbReference>
<dbReference type="GO" id="GO:0009026">
    <property type="term" value="F:tagaturonate reductase activity"/>
    <property type="evidence" value="ECO:0000318"/>
    <property type="project" value="GO_Central"/>
</dbReference>
<dbReference type="GO" id="GO:0019698">
    <property type="term" value="P:D-galacturonate catabolic process"/>
    <property type="evidence" value="ECO:0000318"/>
    <property type="project" value="GO_Central"/>
</dbReference>
<dbReference type="GO" id="GO:0019592">
    <property type="term" value="P:mannitol catabolic process"/>
    <property type="evidence" value="ECO:0000318"/>
    <property type="project" value="GO_Central"/>
</dbReference>
<dbReference type="FunFam" id="3.40.50.720:FF:000153">
    <property type="entry name" value="Altronate oxidoreductase"/>
    <property type="match status" value="1"/>
</dbReference>
<dbReference type="Gene3D" id="1.10.1040.10">
    <property type="entry name" value="N-(1-d-carboxylethyl)-l-norvaline Dehydrogenase, domain 2"/>
    <property type="match status" value="1"/>
</dbReference>
<dbReference type="Gene3D" id="3.40.50.720">
    <property type="entry name" value="NAD(P)-binding Rossmann-like Domain"/>
    <property type="match status" value="1"/>
</dbReference>
<dbReference type="HAMAP" id="MF_00670">
    <property type="entry name" value="Altron_oxidoreduct"/>
    <property type="match status" value="1"/>
</dbReference>
<dbReference type="InterPro" id="IPR008927">
    <property type="entry name" value="6-PGluconate_DH-like_C_sf"/>
</dbReference>
<dbReference type="InterPro" id="IPR013328">
    <property type="entry name" value="6PGD_dom2"/>
</dbReference>
<dbReference type="InterPro" id="IPR023668">
    <property type="entry name" value="Altronate_OxRdtase"/>
</dbReference>
<dbReference type="InterPro" id="IPR013118">
    <property type="entry name" value="Mannitol_DH_C"/>
</dbReference>
<dbReference type="InterPro" id="IPR013131">
    <property type="entry name" value="Mannitol_DH_N"/>
</dbReference>
<dbReference type="InterPro" id="IPR036291">
    <property type="entry name" value="NAD(P)-bd_dom_sf"/>
</dbReference>
<dbReference type="NCBIfam" id="NF002969">
    <property type="entry name" value="PRK03643.1"/>
    <property type="match status" value="1"/>
</dbReference>
<dbReference type="PANTHER" id="PTHR30524:SF0">
    <property type="entry name" value="ALTRONATE OXIDOREDUCTASE-RELATED"/>
    <property type="match status" value="1"/>
</dbReference>
<dbReference type="PANTHER" id="PTHR30524">
    <property type="entry name" value="MANNITOL-1-PHOSPHATE 5-DEHYDROGENASE"/>
    <property type="match status" value="1"/>
</dbReference>
<dbReference type="Pfam" id="PF01232">
    <property type="entry name" value="Mannitol_dh"/>
    <property type="match status" value="1"/>
</dbReference>
<dbReference type="Pfam" id="PF08125">
    <property type="entry name" value="Mannitol_dh_C"/>
    <property type="match status" value="1"/>
</dbReference>
<dbReference type="SUPFAM" id="SSF48179">
    <property type="entry name" value="6-phosphogluconate dehydrogenase C-terminal domain-like"/>
    <property type="match status" value="1"/>
</dbReference>
<dbReference type="SUPFAM" id="SSF51735">
    <property type="entry name" value="NAD(P)-binding Rossmann-fold domains"/>
    <property type="match status" value="1"/>
</dbReference>
<gene>
    <name evidence="1" type="primary">uxaB</name>
    <name type="ordered locus">YPO0580</name>
    <name type="ordered locus">y3599</name>
    <name type="ordered locus">YP_2900</name>
</gene>
<accession>Q8ZIC5</accession>
<accession>Q0WJ86</accession>
<organism>
    <name type="scientific">Yersinia pestis</name>
    <dbReference type="NCBI Taxonomy" id="632"/>
    <lineage>
        <taxon>Bacteria</taxon>
        <taxon>Pseudomonadati</taxon>
        <taxon>Pseudomonadota</taxon>
        <taxon>Gammaproteobacteria</taxon>
        <taxon>Enterobacterales</taxon>
        <taxon>Yersiniaceae</taxon>
        <taxon>Yersinia</taxon>
    </lineage>
</organism>
<keyword id="KW-0520">NAD</keyword>
<keyword id="KW-0560">Oxidoreductase</keyword>
<keyword id="KW-1185">Reference proteome</keyword>
<sequence>MQTLNRRDFPGRSHPDKIIQFGEGNFLRAFVDWQIDLLNEHTDLNAGIVVIRPIDTDFPPSLSTQDGLYTAVIRGLNEQGEAVRESRLIRSVNREINIYRQFDDYLALARDANIRFMFSNTTEAGIAWNEADQFSDAPPSSFPAKLTRLLFERFEHFDGAADKGWVLLPCELIDYNGEALRELVLRYASHWQLPAAFTHWLTENNTFCSTLVDRIVTGYPRDEVAALQTELGYQDSFLDTAEYFYLFVIQGPQGLAQELRLDQLDLNVRIVDDIKPYKERKVAILNGAHTALVPVAYLSGLDTVGQTMDDAQISRFVEKTITEEIVPVLDLPEDELLSFSQAVLSRFRNPFIQHQLLSIALNGMTKFRTRILPQLLTYQQQKGQLPPRLTFALAALIAFYRGEREGQTYPLQDDAHWLERYSTLWNGVKHGDIALAELVNRVLSDANHWGQDLTAVPQLANQVTEQLQTILSRGMRAAVAAYS</sequence>
<name>UXAB_YERPE</name>
<evidence type="ECO:0000255" key="1">
    <source>
        <dbReference type="HAMAP-Rule" id="MF_00670"/>
    </source>
</evidence>
<evidence type="ECO:0000305" key="2"/>
<reference key="1">
    <citation type="journal article" date="2001" name="Nature">
        <title>Genome sequence of Yersinia pestis, the causative agent of plague.</title>
        <authorList>
            <person name="Parkhill J."/>
            <person name="Wren B.W."/>
            <person name="Thomson N.R."/>
            <person name="Titball R.W."/>
            <person name="Holden M.T.G."/>
            <person name="Prentice M.B."/>
            <person name="Sebaihia M."/>
            <person name="James K.D."/>
            <person name="Churcher C.M."/>
            <person name="Mungall K.L."/>
            <person name="Baker S."/>
            <person name="Basham D."/>
            <person name="Bentley S.D."/>
            <person name="Brooks K."/>
            <person name="Cerdeno-Tarraga A.-M."/>
            <person name="Chillingworth T."/>
            <person name="Cronin A."/>
            <person name="Davies R.M."/>
            <person name="Davis P."/>
            <person name="Dougan G."/>
            <person name="Feltwell T."/>
            <person name="Hamlin N."/>
            <person name="Holroyd S."/>
            <person name="Jagels K."/>
            <person name="Karlyshev A.V."/>
            <person name="Leather S."/>
            <person name="Moule S."/>
            <person name="Oyston P.C.F."/>
            <person name="Quail M.A."/>
            <person name="Rutherford K.M."/>
            <person name="Simmonds M."/>
            <person name="Skelton J."/>
            <person name="Stevens K."/>
            <person name="Whitehead S."/>
            <person name="Barrell B.G."/>
        </authorList>
    </citation>
    <scope>NUCLEOTIDE SEQUENCE [LARGE SCALE GENOMIC DNA]</scope>
    <source>
        <strain>CO-92 / Biovar Orientalis</strain>
    </source>
</reference>
<reference key="2">
    <citation type="journal article" date="2002" name="J. Bacteriol.">
        <title>Genome sequence of Yersinia pestis KIM.</title>
        <authorList>
            <person name="Deng W."/>
            <person name="Burland V."/>
            <person name="Plunkett G. III"/>
            <person name="Boutin A."/>
            <person name="Mayhew G.F."/>
            <person name="Liss P."/>
            <person name="Perna N.T."/>
            <person name="Rose D.J."/>
            <person name="Mau B."/>
            <person name="Zhou S."/>
            <person name="Schwartz D.C."/>
            <person name="Fetherston J.D."/>
            <person name="Lindler L.E."/>
            <person name="Brubaker R.R."/>
            <person name="Plano G.V."/>
            <person name="Straley S.C."/>
            <person name="McDonough K.A."/>
            <person name="Nilles M.L."/>
            <person name="Matson J.S."/>
            <person name="Blattner F.R."/>
            <person name="Perry R.D."/>
        </authorList>
    </citation>
    <scope>NUCLEOTIDE SEQUENCE [LARGE SCALE GENOMIC DNA]</scope>
    <source>
        <strain>KIM10+ / Biovar Mediaevalis</strain>
    </source>
</reference>
<reference key="3">
    <citation type="journal article" date="2004" name="DNA Res.">
        <title>Complete genome sequence of Yersinia pestis strain 91001, an isolate avirulent to humans.</title>
        <authorList>
            <person name="Song Y."/>
            <person name="Tong Z."/>
            <person name="Wang J."/>
            <person name="Wang L."/>
            <person name="Guo Z."/>
            <person name="Han Y."/>
            <person name="Zhang J."/>
            <person name="Pei D."/>
            <person name="Zhou D."/>
            <person name="Qin H."/>
            <person name="Pang X."/>
            <person name="Han Y."/>
            <person name="Zhai J."/>
            <person name="Li M."/>
            <person name="Cui B."/>
            <person name="Qi Z."/>
            <person name="Jin L."/>
            <person name="Dai R."/>
            <person name="Chen F."/>
            <person name="Li S."/>
            <person name="Ye C."/>
            <person name="Du Z."/>
            <person name="Lin W."/>
            <person name="Wang J."/>
            <person name="Yu J."/>
            <person name="Yang H."/>
            <person name="Wang J."/>
            <person name="Huang P."/>
            <person name="Yang R."/>
        </authorList>
    </citation>
    <scope>NUCLEOTIDE SEQUENCE [LARGE SCALE GENOMIC DNA]</scope>
    <source>
        <strain>91001 / Biovar Mediaevalis</strain>
    </source>
</reference>
<protein>
    <recommendedName>
        <fullName evidence="1">Altronate oxidoreductase</fullName>
        <ecNumber evidence="1">1.1.1.58</ecNumber>
    </recommendedName>
    <alternativeName>
        <fullName evidence="1">Tagaturonate dehydrogenase</fullName>
    </alternativeName>
    <alternativeName>
        <fullName evidence="1">Tagaturonate reductase</fullName>
    </alternativeName>
</protein>